<name>RLME_HAEI8</name>
<proteinExistence type="inferred from homology"/>
<reference key="1">
    <citation type="journal article" date="2005" name="J. Bacteriol.">
        <title>Genomic sequence of an otitis media isolate of nontypeable Haemophilus influenzae: comparative study with H. influenzae serotype d, strain KW20.</title>
        <authorList>
            <person name="Harrison A."/>
            <person name="Dyer D.W."/>
            <person name="Gillaspy A."/>
            <person name="Ray W.C."/>
            <person name="Mungur R."/>
            <person name="Carson M.B."/>
            <person name="Zhong H."/>
            <person name="Gipson J."/>
            <person name="Gipson M."/>
            <person name="Johnson L.S."/>
            <person name="Lewis L."/>
            <person name="Bakaletz L.O."/>
            <person name="Munson R.S. Jr."/>
        </authorList>
    </citation>
    <scope>NUCLEOTIDE SEQUENCE [LARGE SCALE GENOMIC DNA]</scope>
    <source>
        <strain>86-028NP</strain>
    </source>
</reference>
<gene>
    <name evidence="1" type="primary">rlmE</name>
    <name evidence="1" type="synonym">ftsJ</name>
    <name evidence="1" type="synonym">rrmJ</name>
    <name type="ordered locus">NTHI1660</name>
</gene>
<accession>Q4QKJ2</accession>
<dbReference type="EC" id="2.1.1.166" evidence="1"/>
<dbReference type="EMBL" id="CP000057">
    <property type="protein sequence ID" value="AAX88455.1"/>
    <property type="molecule type" value="Genomic_DNA"/>
</dbReference>
<dbReference type="RefSeq" id="WP_005688212.1">
    <property type="nucleotide sequence ID" value="NC_007146.2"/>
</dbReference>
<dbReference type="SMR" id="Q4QKJ2"/>
<dbReference type="KEGG" id="hit:NTHI1660"/>
<dbReference type="HOGENOM" id="CLU_009422_4_0_6"/>
<dbReference type="Proteomes" id="UP000002525">
    <property type="component" value="Chromosome"/>
</dbReference>
<dbReference type="GO" id="GO:0005737">
    <property type="term" value="C:cytoplasm"/>
    <property type="evidence" value="ECO:0007669"/>
    <property type="project" value="UniProtKB-SubCell"/>
</dbReference>
<dbReference type="GO" id="GO:0008650">
    <property type="term" value="F:rRNA (uridine-2'-O-)-methyltransferase activity"/>
    <property type="evidence" value="ECO:0007669"/>
    <property type="project" value="UniProtKB-UniRule"/>
</dbReference>
<dbReference type="FunFam" id="3.40.50.150:FF:000005">
    <property type="entry name" value="Ribosomal RNA large subunit methyltransferase E"/>
    <property type="match status" value="1"/>
</dbReference>
<dbReference type="Gene3D" id="3.40.50.150">
    <property type="entry name" value="Vaccinia Virus protein VP39"/>
    <property type="match status" value="1"/>
</dbReference>
<dbReference type="HAMAP" id="MF_01547">
    <property type="entry name" value="RNA_methyltr_E"/>
    <property type="match status" value="1"/>
</dbReference>
<dbReference type="InterPro" id="IPR050082">
    <property type="entry name" value="RNA_methyltr_RlmE"/>
</dbReference>
<dbReference type="InterPro" id="IPR002877">
    <property type="entry name" value="RNA_MeTrfase_FtsJ_dom"/>
</dbReference>
<dbReference type="InterPro" id="IPR015507">
    <property type="entry name" value="rRNA-MeTfrase_E"/>
</dbReference>
<dbReference type="InterPro" id="IPR004512">
    <property type="entry name" value="rRNA_MeTrfase_gammaproteobac"/>
</dbReference>
<dbReference type="InterPro" id="IPR029063">
    <property type="entry name" value="SAM-dependent_MTases_sf"/>
</dbReference>
<dbReference type="NCBIfam" id="NF008390">
    <property type="entry name" value="PRK11188.1"/>
    <property type="match status" value="1"/>
</dbReference>
<dbReference type="NCBIfam" id="TIGR00438">
    <property type="entry name" value="rrmJ"/>
    <property type="match status" value="1"/>
</dbReference>
<dbReference type="PANTHER" id="PTHR10920">
    <property type="entry name" value="RIBOSOMAL RNA METHYLTRANSFERASE"/>
    <property type="match status" value="1"/>
</dbReference>
<dbReference type="PANTHER" id="PTHR10920:SF18">
    <property type="entry name" value="RRNA METHYLTRANSFERASE 2, MITOCHONDRIAL"/>
    <property type="match status" value="1"/>
</dbReference>
<dbReference type="Pfam" id="PF01728">
    <property type="entry name" value="FtsJ"/>
    <property type="match status" value="1"/>
</dbReference>
<dbReference type="PIRSF" id="PIRSF005461">
    <property type="entry name" value="23S_rRNA_mtase"/>
    <property type="match status" value="1"/>
</dbReference>
<dbReference type="SUPFAM" id="SSF53335">
    <property type="entry name" value="S-adenosyl-L-methionine-dependent methyltransferases"/>
    <property type="match status" value="1"/>
</dbReference>
<evidence type="ECO:0000255" key="1">
    <source>
        <dbReference type="HAMAP-Rule" id="MF_01547"/>
    </source>
</evidence>
<organism>
    <name type="scientific">Haemophilus influenzae (strain 86-028NP)</name>
    <dbReference type="NCBI Taxonomy" id="281310"/>
    <lineage>
        <taxon>Bacteria</taxon>
        <taxon>Pseudomonadati</taxon>
        <taxon>Pseudomonadota</taxon>
        <taxon>Gammaproteobacteria</taxon>
        <taxon>Pasteurellales</taxon>
        <taxon>Pasteurellaceae</taxon>
        <taxon>Haemophilus</taxon>
    </lineage>
</organism>
<comment type="function">
    <text evidence="1">Specifically methylates the uridine in position 2552 of 23S rRNA at the 2'-O position of the ribose in the fully assembled 50S ribosomal subunit.</text>
</comment>
<comment type="catalytic activity">
    <reaction evidence="1">
        <text>uridine(2552) in 23S rRNA + S-adenosyl-L-methionine = 2'-O-methyluridine(2552) in 23S rRNA + S-adenosyl-L-homocysteine + H(+)</text>
        <dbReference type="Rhea" id="RHEA:42720"/>
        <dbReference type="Rhea" id="RHEA-COMP:10202"/>
        <dbReference type="Rhea" id="RHEA-COMP:10203"/>
        <dbReference type="ChEBI" id="CHEBI:15378"/>
        <dbReference type="ChEBI" id="CHEBI:57856"/>
        <dbReference type="ChEBI" id="CHEBI:59789"/>
        <dbReference type="ChEBI" id="CHEBI:65315"/>
        <dbReference type="ChEBI" id="CHEBI:74478"/>
        <dbReference type="EC" id="2.1.1.166"/>
    </reaction>
</comment>
<comment type="subcellular location">
    <subcellularLocation>
        <location evidence="1">Cytoplasm</location>
    </subcellularLocation>
</comment>
<comment type="similarity">
    <text evidence="1">Belongs to the class I-like SAM-binding methyltransferase superfamily. RNA methyltransferase RlmE family.</text>
</comment>
<keyword id="KW-0963">Cytoplasm</keyword>
<keyword id="KW-0489">Methyltransferase</keyword>
<keyword id="KW-0698">rRNA processing</keyword>
<keyword id="KW-0949">S-adenosyl-L-methionine</keyword>
<keyword id="KW-0808">Transferase</keyword>
<protein>
    <recommendedName>
        <fullName evidence="1">Ribosomal RNA large subunit methyltransferase E</fullName>
        <ecNumber evidence="1">2.1.1.166</ecNumber>
    </recommendedName>
    <alternativeName>
        <fullName evidence="1">23S rRNA Um2552 methyltransferase</fullName>
    </alternativeName>
    <alternativeName>
        <fullName evidence="1">rRNA (uridine-2'-O-)-methyltransferase</fullName>
    </alternativeName>
</protein>
<sequence length="209" mass="23421">MGKKKRSASSSRWLNEHFSDQFVQKAHKQKLRSRAYFKIDEIQQTDKLFKQGMTVVDLGAAPGGWSQYVVSQIGGKGRVIACDILEMDPIVGVDFLQGDFRDENVLNALLERVGEAKVDVVMSDMAPNFSGMPSVDIPRAMYLVELALDMCKQVLASKGSFVVKVFQGEGFDEYLREIRSLFNVVKVRKPEASRGRSREVYIVATGYKG</sequence>
<feature type="chain" id="PRO_0000155504" description="Ribosomal RNA large subunit methyltransferase E">
    <location>
        <begin position="1"/>
        <end position="209"/>
    </location>
</feature>
<feature type="domain" description="TRAM" evidence="1">
    <location>
        <begin position="191"/>
        <end position="209"/>
    </location>
</feature>
<feature type="active site" description="Proton acceptor" evidence="1">
    <location>
        <position position="164"/>
    </location>
</feature>
<feature type="binding site" evidence="1">
    <location>
        <position position="63"/>
    </location>
    <ligand>
        <name>S-adenosyl-L-methionine</name>
        <dbReference type="ChEBI" id="CHEBI:59789"/>
    </ligand>
</feature>
<feature type="binding site" evidence="1">
    <location>
        <position position="65"/>
    </location>
    <ligand>
        <name>S-adenosyl-L-methionine</name>
        <dbReference type="ChEBI" id="CHEBI:59789"/>
    </ligand>
</feature>
<feature type="binding site" evidence="1">
    <location>
        <position position="83"/>
    </location>
    <ligand>
        <name>S-adenosyl-L-methionine</name>
        <dbReference type="ChEBI" id="CHEBI:59789"/>
    </ligand>
</feature>
<feature type="binding site" evidence="1">
    <location>
        <position position="99"/>
    </location>
    <ligand>
        <name>S-adenosyl-L-methionine</name>
        <dbReference type="ChEBI" id="CHEBI:59789"/>
    </ligand>
</feature>
<feature type="binding site" evidence="1">
    <location>
        <position position="124"/>
    </location>
    <ligand>
        <name>S-adenosyl-L-methionine</name>
        <dbReference type="ChEBI" id="CHEBI:59789"/>
    </ligand>
</feature>